<sequence>MLLRKTLKNPFIANWTSKGNTLCLGHWEIQYLNTTLILPPERREKDMGTQGIYYFIDPEDRLYLEGLDEDDWILANIDWLSDVFIQANIPLEEPYLRQFYQAVNQEDWRCGSCGGCL</sequence>
<accession>Q9CP15</accession>
<dbReference type="EMBL" id="AE004439">
    <property type="protein sequence ID" value="AAK02337.1"/>
    <property type="molecule type" value="Genomic_DNA"/>
</dbReference>
<dbReference type="SMR" id="Q9CP15"/>
<dbReference type="STRING" id="272843.PM0253"/>
<dbReference type="EnsemblBacteria" id="AAK02337">
    <property type="protein sequence ID" value="AAK02337"/>
    <property type="gene ID" value="PM0253"/>
</dbReference>
<dbReference type="KEGG" id="pmu:PM0253"/>
<dbReference type="HOGENOM" id="CLU_137757_0_0_6"/>
<dbReference type="Proteomes" id="UP000000809">
    <property type="component" value="Chromosome"/>
</dbReference>
<name>Y253_PASMU</name>
<protein>
    <recommendedName>
        <fullName>Uncharacterized protein PM0253</fullName>
    </recommendedName>
</protein>
<feature type="chain" id="PRO_0000216288" description="Uncharacterized protein PM0253">
    <location>
        <begin position="1"/>
        <end position="117"/>
    </location>
</feature>
<gene>
    <name type="ordered locus">PM0253</name>
</gene>
<keyword id="KW-1185">Reference proteome</keyword>
<organism>
    <name type="scientific">Pasteurella multocida (strain Pm70)</name>
    <dbReference type="NCBI Taxonomy" id="272843"/>
    <lineage>
        <taxon>Bacteria</taxon>
        <taxon>Pseudomonadati</taxon>
        <taxon>Pseudomonadota</taxon>
        <taxon>Gammaproteobacteria</taxon>
        <taxon>Pasteurellales</taxon>
        <taxon>Pasteurellaceae</taxon>
        <taxon>Pasteurella</taxon>
    </lineage>
</organism>
<proteinExistence type="predicted"/>
<reference key="1">
    <citation type="journal article" date="2001" name="Proc. Natl. Acad. Sci. U.S.A.">
        <title>Complete genomic sequence of Pasteurella multocida Pm70.</title>
        <authorList>
            <person name="May B.J."/>
            <person name="Zhang Q."/>
            <person name="Li L.L."/>
            <person name="Paustian M.L."/>
            <person name="Whittam T.S."/>
            <person name="Kapur V."/>
        </authorList>
    </citation>
    <scope>NUCLEOTIDE SEQUENCE [LARGE SCALE GENOMIC DNA]</scope>
    <source>
        <strain>Pm70</strain>
    </source>
</reference>